<feature type="signal peptide" evidence="3">
    <location>
        <begin position="1"/>
        <end position="33"/>
    </location>
</feature>
<feature type="chain" id="PRO_0000013584" description="Endoplasmic reticulum chaperone BiP">
    <location>
        <begin position="34"/>
        <end position="665"/>
    </location>
</feature>
<feature type="region of interest" description="Nucleotide-binding (NBD)" evidence="1">
    <location>
        <begin position="136"/>
        <end position="290"/>
    </location>
</feature>
<feature type="region of interest" description="Substrate-binding (SBD)" evidence="1">
    <location>
        <begin position="410"/>
        <end position="510"/>
    </location>
</feature>
<feature type="region of interest" description="Disordered" evidence="5">
    <location>
        <begin position="644"/>
        <end position="665"/>
    </location>
</feature>
<feature type="short sequence motif" description="Prevents secretion from ER" evidence="4">
    <location>
        <begin position="662"/>
        <end position="665"/>
    </location>
</feature>
<feature type="compositionally biased region" description="Acidic residues" evidence="5">
    <location>
        <begin position="652"/>
        <end position="665"/>
    </location>
</feature>
<feature type="binding site" evidence="1">
    <location>
        <begin position="48"/>
        <end position="51"/>
    </location>
    <ligand>
        <name>ATP</name>
        <dbReference type="ChEBI" id="CHEBI:30616"/>
    </ligand>
</feature>
<feature type="binding site" evidence="1">
    <location>
        <position position="107"/>
    </location>
    <ligand>
        <name>ATP</name>
        <dbReference type="ChEBI" id="CHEBI:30616"/>
    </ligand>
</feature>
<feature type="binding site" evidence="1">
    <location>
        <begin position="237"/>
        <end position="239"/>
    </location>
    <ligand>
        <name>ATP</name>
        <dbReference type="ChEBI" id="CHEBI:30616"/>
    </ligand>
</feature>
<feature type="binding site" evidence="1">
    <location>
        <begin position="303"/>
        <end position="310"/>
    </location>
    <ligand>
        <name>ATP</name>
        <dbReference type="ChEBI" id="CHEBI:30616"/>
    </ligand>
</feature>
<feature type="binding site" evidence="1">
    <location>
        <begin position="374"/>
        <end position="377"/>
    </location>
    <ligand>
        <name>ATP</name>
        <dbReference type="ChEBI" id="CHEBI:30616"/>
    </ligand>
</feature>
<reference key="1">
    <citation type="journal article" date="2002" name="Appl. Microbiol. Biotechnol.">
        <title>Overproduction of BiP negatively affects the secretion of Aspergillus niger glucose oxidase by the yeast Hansenula polymorpha.</title>
        <authorList>
            <person name="van der Heide M."/>
            <person name="Hollenberg C.P."/>
            <person name="van der Klei I.J."/>
            <person name="Veenhuis M."/>
        </authorList>
    </citation>
    <scope>NUCLEOTIDE SEQUENCE [GENOMIC DNA]</scope>
    <source>
        <strain>ATCC 14754 / CBS 1976 / JCM 3620 / NBRC 0799 / NCYC 495 / NRRL Y-1798 / VKM Y-1397</strain>
    </source>
</reference>
<organism>
    <name type="scientific">Pichia angusta</name>
    <name type="common">Yeast</name>
    <name type="synonym">Hansenula polymorpha</name>
    <dbReference type="NCBI Taxonomy" id="870730"/>
    <lineage>
        <taxon>Eukaryota</taxon>
        <taxon>Fungi</taxon>
        <taxon>Dikarya</taxon>
        <taxon>Ascomycota</taxon>
        <taxon>Saccharomycotina</taxon>
        <taxon>Pichiomycetes</taxon>
        <taxon>Pichiales</taxon>
        <taxon>Pichiaceae</taxon>
        <taxon>Ogataea</taxon>
    </lineage>
</organism>
<name>BIP_PICAN</name>
<evidence type="ECO:0000250" key="1">
    <source>
        <dbReference type="UniProtKB" id="P11021"/>
    </source>
</evidence>
<evidence type="ECO:0000250" key="2">
    <source>
        <dbReference type="UniProtKB" id="P16474"/>
    </source>
</evidence>
<evidence type="ECO:0000255" key="3"/>
<evidence type="ECO:0000255" key="4">
    <source>
        <dbReference type="PROSITE-ProRule" id="PRU10138"/>
    </source>
</evidence>
<evidence type="ECO:0000256" key="5">
    <source>
        <dbReference type="SAM" id="MobiDB-lite"/>
    </source>
</evidence>
<evidence type="ECO:0000305" key="6"/>
<protein>
    <recommendedName>
        <fullName evidence="6">Endoplasmic reticulum chaperone BiP</fullName>
        <ecNumber evidence="1">3.6.4.10</ecNumber>
    </recommendedName>
    <alternativeName>
        <fullName evidence="6">Immunoglobulin heavy chain-binding protein homolog</fullName>
        <shortName evidence="6">BiP</shortName>
    </alternativeName>
</protein>
<gene>
    <name type="primary">BiP</name>
</gene>
<dbReference type="EC" id="3.6.4.10" evidence="1"/>
<dbReference type="EMBL" id="AF245405">
    <property type="protein sequence ID" value="AAG09776.1"/>
    <property type="molecule type" value="Genomic_DNA"/>
</dbReference>
<dbReference type="SMR" id="Q9HG01"/>
<dbReference type="PhylomeDB" id="Q9HG01"/>
<dbReference type="GO" id="GO:0005788">
    <property type="term" value="C:endoplasmic reticulum lumen"/>
    <property type="evidence" value="ECO:0007669"/>
    <property type="project" value="UniProtKB-SubCell"/>
</dbReference>
<dbReference type="GO" id="GO:0005524">
    <property type="term" value="F:ATP binding"/>
    <property type="evidence" value="ECO:0007669"/>
    <property type="project" value="UniProtKB-KW"/>
</dbReference>
<dbReference type="GO" id="GO:0016887">
    <property type="term" value="F:ATP hydrolysis activity"/>
    <property type="evidence" value="ECO:0007669"/>
    <property type="project" value="RHEA"/>
</dbReference>
<dbReference type="GO" id="GO:0140662">
    <property type="term" value="F:ATP-dependent protein folding chaperone"/>
    <property type="evidence" value="ECO:0007669"/>
    <property type="project" value="InterPro"/>
</dbReference>
<dbReference type="GO" id="GO:0006986">
    <property type="term" value="P:response to unfolded protein"/>
    <property type="evidence" value="ECO:0000250"/>
    <property type="project" value="UniProtKB"/>
</dbReference>
<dbReference type="CDD" id="cd10241">
    <property type="entry name" value="ASKHA_NBD_HSP70_BiP"/>
    <property type="match status" value="1"/>
</dbReference>
<dbReference type="FunFam" id="1.20.1270.10:FF:000009">
    <property type="entry name" value="DnaK-type molecular chaperone BiP"/>
    <property type="match status" value="1"/>
</dbReference>
<dbReference type="FunFam" id="2.60.34.10:FF:000002">
    <property type="entry name" value="Heat shock 70 kDa"/>
    <property type="match status" value="1"/>
</dbReference>
<dbReference type="FunFam" id="3.90.640.10:FF:000002">
    <property type="entry name" value="Heat shock 70 kDa"/>
    <property type="match status" value="1"/>
</dbReference>
<dbReference type="FunFam" id="3.30.420.40:FF:000026">
    <property type="entry name" value="Heat shock protein 70"/>
    <property type="match status" value="1"/>
</dbReference>
<dbReference type="FunFam" id="3.30.30.30:FF:000005">
    <property type="entry name" value="Heat shock protein ssb1"/>
    <property type="match status" value="1"/>
</dbReference>
<dbReference type="Gene3D" id="1.20.1270.10">
    <property type="match status" value="1"/>
</dbReference>
<dbReference type="Gene3D" id="3.30.30.30">
    <property type="match status" value="1"/>
</dbReference>
<dbReference type="Gene3D" id="3.30.420.40">
    <property type="match status" value="2"/>
</dbReference>
<dbReference type="Gene3D" id="3.90.640.10">
    <property type="entry name" value="Actin, Chain A, domain 4"/>
    <property type="match status" value="1"/>
</dbReference>
<dbReference type="Gene3D" id="2.60.34.10">
    <property type="entry name" value="Substrate Binding Domain Of DNAk, Chain A, domain 1"/>
    <property type="match status" value="1"/>
</dbReference>
<dbReference type="InterPro" id="IPR043129">
    <property type="entry name" value="ATPase_NBD"/>
</dbReference>
<dbReference type="InterPro" id="IPR042050">
    <property type="entry name" value="BIP_NBD"/>
</dbReference>
<dbReference type="InterPro" id="IPR018181">
    <property type="entry name" value="Heat_shock_70_CS"/>
</dbReference>
<dbReference type="InterPro" id="IPR029048">
    <property type="entry name" value="HSP70_C_sf"/>
</dbReference>
<dbReference type="InterPro" id="IPR029047">
    <property type="entry name" value="HSP70_peptide-bd_sf"/>
</dbReference>
<dbReference type="InterPro" id="IPR013126">
    <property type="entry name" value="Hsp_70_fam"/>
</dbReference>
<dbReference type="NCBIfam" id="NF001413">
    <property type="entry name" value="PRK00290.1"/>
    <property type="match status" value="1"/>
</dbReference>
<dbReference type="PANTHER" id="PTHR19375">
    <property type="entry name" value="HEAT SHOCK PROTEIN 70KDA"/>
    <property type="match status" value="1"/>
</dbReference>
<dbReference type="Pfam" id="PF00012">
    <property type="entry name" value="HSP70"/>
    <property type="match status" value="1"/>
</dbReference>
<dbReference type="PRINTS" id="PR00301">
    <property type="entry name" value="HEATSHOCK70"/>
</dbReference>
<dbReference type="SUPFAM" id="SSF53067">
    <property type="entry name" value="Actin-like ATPase domain"/>
    <property type="match status" value="2"/>
</dbReference>
<dbReference type="SUPFAM" id="SSF100934">
    <property type="entry name" value="Heat shock protein 70kD (HSP70), C-terminal subdomain"/>
    <property type="match status" value="1"/>
</dbReference>
<dbReference type="SUPFAM" id="SSF100920">
    <property type="entry name" value="Heat shock protein 70kD (HSP70), peptide-binding domain"/>
    <property type="match status" value="1"/>
</dbReference>
<dbReference type="PROSITE" id="PS00014">
    <property type="entry name" value="ER_TARGET"/>
    <property type="match status" value="1"/>
</dbReference>
<dbReference type="PROSITE" id="PS00297">
    <property type="entry name" value="HSP70_1"/>
    <property type="match status" value="1"/>
</dbReference>
<dbReference type="PROSITE" id="PS00329">
    <property type="entry name" value="HSP70_2"/>
    <property type="match status" value="1"/>
</dbReference>
<dbReference type="PROSITE" id="PS01036">
    <property type="entry name" value="HSP70_3"/>
    <property type="match status" value="1"/>
</dbReference>
<accession>Q9HG01</accession>
<proteinExistence type="inferred from homology"/>
<comment type="function">
    <text evidence="2">Probably plays a role in facilitating the assembly of multimeric protein complexes inside the ER. Is required for secretory polypeptide translocation. May physically associate with SEC63 protein in the endoplasmic reticulum and this interaction may be regulated by ATP hydrolysis.</text>
</comment>
<comment type="catalytic activity">
    <reaction evidence="1">
        <text>ATP + H2O = ADP + phosphate + H(+)</text>
        <dbReference type="Rhea" id="RHEA:13065"/>
        <dbReference type="ChEBI" id="CHEBI:15377"/>
        <dbReference type="ChEBI" id="CHEBI:15378"/>
        <dbReference type="ChEBI" id="CHEBI:30616"/>
        <dbReference type="ChEBI" id="CHEBI:43474"/>
        <dbReference type="ChEBI" id="CHEBI:456216"/>
        <dbReference type="EC" id="3.6.4.10"/>
    </reaction>
</comment>
<comment type="activity regulation">
    <text evidence="1">The chaperone activity is regulated by ATP-induced allosteric coupling of the nucleotide-binding (NBD) and substrate-binding (SBD) domains. In the ADP-bound and nucleotide-free (apo) states, the two domains have little interaction. In contrast, in the ATP-bound state the two domains are tightly coupled, which results in drastically accelerated kinetics in both binding and release of polypeptide substrates. J domain-containing co-chaperones stimulate the ATPase activity and are required for efficient substrate recognition.</text>
</comment>
<comment type="subcellular location">
    <subcellularLocation>
        <location evidence="2 4">Endoplasmic reticulum lumen</location>
    </subcellularLocation>
</comment>
<comment type="similarity">
    <text evidence="6">Belongs to the heat shock protein 70 family.</text>
</comment>
<keyword id="KW-0067">ATP-binding</keyword>
<keyword id="KW-0143">Chaperone</keyword>
<keyword id="KW-0256">Endoplasmic reticulum</keyword>
<keyword id="KW-0378">Hydrolase</keyword>
<keyword id="KW-0547">Nucleotide-binding</keyword>
<keyword id="KW-0732">Signal</keyword>
<keyword id="KW-0346">Stress response</keyword>
<sequence length="665" mass="73222">MLTFNKSVVSCAAIIYALLLVVLPLTTQQFVKAESNENYGTVIGIDLGTTYSCVGVMKAGRVEIIPNDQGNRITPSYVAFTEDERLVGDAAKNQIASNPTNTIFDIKRLIGHRFDDKVIQKEIKHLPYKVKDQDGRPVVEAKVNGELKTFTAEEISAMILGKMKQIAEDYLGKKVTHAVVTVPAYFNDAQRQATKDAGTIAGLEVLRIVNEPTAAAIAYGLDKTDEEKHIIVYDLGGGTFDVSLLTIAGGAFEVLATAGDTHLGGEDFDYRVVRHFIKVFKKKHGIDISDNSKALAKLKREVEKAKRTLSSQMSTRIEIDSFVDGIDFSESLSRAKFEELNMDLFKKTLKPVQQVLDDAKMKPDEIDDVVFVGGSTRIPKVQELIENFFNGKKISKGINPDEAVAFGAAVQGGVLSGEEGVEDIVLIDVNPLTLGIETSGGVMTTLIKRNTPIPTQKSQIFSTAADNQPVVLIQVYEGERAMAKDNNLLGKFELTGIPPAPRGVPQIEVTFTLDSNGILKVSATDKGTGKSNSITITNDKGRLSKEEIEKKIEEAEKFAQQDKELREKVESRNALENYAHSLKNQANDENGFGAKLEEDDKETLLDAINEALEFLEDNFDTATKDEFDEQKEKLSKVAYPITSKLYDAPPTSDEEDEDDWDHDEL</sequence>